<gene>
    <name evidence="1" type="primary">hisH</name>
    <name type="ordered locus">blr0652</name>
</gene>
<accession>Q89WM6</accession>
<proteinExistence type="inferred from homology"/>
<protein>
    <recommendedName>
        <fullName evidence="1">Imidazole glycerol phosphate synthase subunit HisH</fullName>
        <ecNumber evidence="1">4.3.2.10</ecNumber>
    </recommendedName>
    <alternativeName>
        <fullName evidence="1">IGP synthase glutaminase subunit</fullName>
        <ecNumber evidence="1">3.5.1.2</ecNumber>
    </alternativeName>
    <alternativeName>
        <fullName evidence="1">IGP synthase subunit HisH</fullName>
    </alternativeName>
    <alternativeName>
        <fullName evidence="1">ImGP synthase subunit HisH</fullName>
        <shortName evidence="1">IGPS subunit HisH</shortName>
    </alternativeName>
</protein>
<evidence type="ECO:0000255" key="1">
    <source>
        <dbReference type="HAMAP-Rule" id="MF_00278"/>
    </source>
</evidence>
<comment type="function">
    <text evidence="1">IGPS catalyzes the conversion of PRFAR and glutamine to IGP, AICAR and glutamate. The HisH subunit catalyzes the hydrolysis of glutamine to glutamate and ammonia as part of the synthesis of IGP and AICAR. The resulting ammonia molecule is channeled to the active site of HisF.</text>
</comment>
<comment type="catalytic activity">
    <reaction evidence="1">
        <text>5-[(5-phospho-1-deoxy-D-ribulos-1-ylimino)methylamino]-1-(5-phospho-beta-D-ribosyl)imidazole-4-carboxamide + L-glutamine = D-erythro-1-(imidazol-4-yl)glycerol 3-phosphate + 5-amino-1-(5-phospho-beta-D-ribosyl)imidazole-4-carboxamide + L-glutamate + H(+)</text>
        <dbReference type="Rhea" id="RHEA:24793"/>
        <dbReference type="ChEBI" id="CHEBI:15378"/>
        <dbReference type="ChEBI" id="CHEBI:29985"/>
        <dbReference type="ChEBI" id="CHEBI:58278"/>
        <dbReference type="ChEBI" id="CHEBI:58359"/>
        <dbReference type="ChEBI" id="CHEBI:58475"/>
        <dbReference type="ChEBI" id="CHEBI:58525"/>
        <dbReference type="EC" id="4.3.2.10"/>
    </reaction>
</comment>
<comment type="catalytic activity">
    <reaction evidence="1">
        <text>L-glutamine + H2O = L-glutamate + NH4(+)</text>
        <dbReference type="Rhea" id="RHEA:15889"/>
        <dbReference type="ChEBI" id="CHEBI:15377"/>
        <dbReference type="ChEBI" id="CHEBI:28938"/>
        <dbReference type="ChEBI" id="CHEBI:29985"/>
        <dbReference type="ChEBI" id="CHEBI:58359"/>
        <dbReference type="EC" id="3.5.1.2"/>
    </reaction>
</comment>
<comment type="pathway">
    <text evidence="1">Amino-acid biosynthesis; L-histidine biosynthesis; L-histidine from 5-phospho-alpha-D-ribose 1-diphosphate: step 5/9.</text>
</comment>
<comment type="subunit">
    <text evidence="1">Heterodimer of HisH and HisF.</text>
</comment>
<comment type="subcellular location">
    <subcellularLocation>
        <location evidence="1">Cytoplasm</location>
    </subcellularLocation>
</comment>
<dbReference type="EC" id="4.3.2.10" evidence="1"/>
<dbReference type="EC" id="3.5.1.2" evidence="1"/>
<dbReference type="EMBL" id="BA000040">
    <property type="protein sequence ID" value="BAC45917.1"/>
    <property type="molecule type" value="Genomic_DNA"/>
</dbReference>
<dbReference type="RefSeq" id="NP_767292.1">
    <property type="nucleotide sequence ID" value="NC_004463.1"/>
</dbReference>
<dbReference type="RefSeq" id="WP_011083479.1">
    <property type="nucleotide sequence ID" value="NC_004463.1"/>
</dbReference>
<dbReference type="SMR" id="Q89WM6"/>
<dbReference type="FunCoup" id="Q89WM6">
    <property type="interactions" value="362"/>
</dbReference>
<dbReference type="STRING" id="224911.AAV28_00095"/>
<dbReference type="EnsemblBacteria" id="BAC45917">
    <property type="protein sequence ID" value="BAC45917"/>
    <property type="gene ID" value="BAC45917"/>
</dbReference>
<dbReference type="GeneID" id="46487925"/>
<dbReference type="KEGG" id="bja:blr0652"/>
<dbReference type="PATRIC" id="fig|224911.44.peg.21"/>
<dbReference type="eggNOG" id="COG0118">
    <property type="taxonomic scope" value="Bacteria"/>
</dbReference>
<dbReference type="HOGENOM" id="CLU_071837_2_0_5"/>
<dbReference type="InParanoid" id="Q89WM6"/>
<dbReference type="OrthoDB" id="9807137at2"/>
<dbReference type="PhylomeDB" id="Q89WM6"/>
<dbReference type="UniPathway" id="UPA00031">
    <property type="reaction ID" value="UER00010"/>
</dbReference>
<dbReference type="Proteomes" id="UP000002526">
    <property type="component" value="Chromosome"/>
</dbReference>
<dbReference type="GO" id="GO:0005737">
    <property type="term" value="C:cytoplasm"/>
    <property type="evidence" value="ECO:0007669"/>
    <property type="project" value="UniProtKB-SubCell"/>
</dbReference>
<dbReference type="GO" id="GO:0004359">
    <property type="term" value="F:glutaminase activity"/>
    <property type="evidence" value="ECO:0007669"/>
    <property type="project" value="UniProtKB-EC"/>
</dbReference>
<dbReference type="GO" id="GO:0000107">
    <property type="term" value="F:imidazoleglycerol-phosphate synthase activity"/>
    <property type="evidence" value="ECO:0000318"/>
    <property type="project" value="GO_Central"/>
</dbReference>
<dbReference type="GO" id="GO:0016829">
    <property type="term" value="F:lyase activity"/>
    <property type="evidence" value="ECO:0007669"/>
    <property type="project" value="UniProtKB-KW"/>
</dbReference>
<dbReference type="GO" id="GO:0000105">
    <property type="term" value="P:L-histidine biosynthetic process"/>
    <property type="evidence" value="ECO:0007669"/>
    <property type="project" value="UniProtKB-UniRule"/>
</dbReference>
<dbReference type="CDD" id="cd01748">
    <property type="entry name" value="GATase1_IGP_Synthase"/>
    <property type="match status" value="1"/>
</dbReference>
<dbReference type="Gene3D" id="3.40.50.880">
    <property type="match status" value="1"/>
</dbReference>
<dbReference type="HAMAP" id="MF_00278">
    <property type="entry name" value="HisH"/>
    <property type="match status" value="1"/>
</dbReference>
<dbReference type="InterPro" id="IPR029062">
    <property type="entry name" value="Class_I_gatase-like"/>
</dbReference>
<dbReference type="InterPro" id="IPR017926">
    <property type="entry name" value="GATASE"/>
</dbReference>
<dbReference type="InterPro" id="IPR010139">
    <property type="entry name" value="Imidazole-glycPsynth_HisH"/>
</dbReference>
<dbReference type="NCBIfam" id="TIGR01855">
    <property type="entry name" value="IMP_synth_hisH"/>
    <property type="match status" value="1"/>
</dbReference>
<dbReference type="PANTHER" id="PTHR42701">
    <property type="entry name" value="IMIDAZOLE GLYCEROL PHOSPHATE SYNTHASE SUBUNIT HISH"/>
    <property type="match status" value="1"/>
</dbReference>
<dbReference type="PANTHER" id="PTHR42701:SF1">
    <property type="entry name" value="IMIDAZOLE GLYCEROL PHOSPHATE SYNTHASE SUBUNIT HISH"/>
    <property type="match status" value="1"/>
</dbReference>
<dbReference type="Pfam" id="PF00117">
    <property type="entry name" value="GATase"/>
    <property type="match status" value="1"/>
</dbReference>
<dbReference type="PIRSF" id="PIRSF000495">
    <property type="entry name" value="Amidotransf_hisH"/>
    <property type="match status" value="1"/>
</dbReference>
<dbReference type="SUPFAM" id="SSF52317">
    <property type="entry name" value="Class I glutamine amidotransferase-like"/>
    <property type="match status" value="1"/>
</dbReference>
<dbReference type="PROSITE" id="PS51273">
    <property type="entry name" value="GATASE_TYPE_1"/>
    <property type="match status" value="1"/>
</dbReference>
<name>HIS5_BRADU</name>
<reference key="1">
    <citation type="journal article" date="2002" name="DNA Res.">
        <title>Complete genomic sequence of nitrogen-fixing symbiotic bacterium Bradyrhizobium japonicum USDA110.</title>
        <authorList>
            <person name="Kaneko T."/>
            <person name="Nakamura Y."/>
            <person name="Sato S."/>
            <person name="Minamisawa K."/>
            <person name="Uchiumi T."/>
            <person name="Sasamoto S."/>
            <person name="Watanabe A."/>
            <person name="Idesawa K."/>
            <person name="Iriguchi M."/>
            <person name="Kawashima K."/>
            <person name="Kohara M."/>
            <person name="Matsumoto M."/>
            <person name="Shimpo S."/>
            <person name="Tsuruoka H."/>
            <person name="Wada T."/>
            <person name="Yamada M."/>
            <person name="Tabata S."/>
        </authorList>
    </citation>
    <scope>NUCLEOTIDE SEQUENCE [LARGE SCALE GENOMIC DNA]</scope>
    <source>
        <strain>JCM 10833 / BCRC 13528 / IAM 13628 / NBRC 14792 / USDA 110</strain>
    </source>
</reference>
<feature type="chain" id="PRO_0000152351" description="Imidazole glycerol phosphate synthase subunit HisH">
    <location>
        <begin position="1"/>
        <end position="216"/>
    </location>
</feature>
<feature type="domain" description="Glutamine amidotransferase type-1" evidence="1">
    <location>
        <begin position="2"/>
        <end position="216"/>
    </location>
</feature>
<feature type="active site" description="Nucleophile" evidence="1">
    <location>
        <position position="88"/>
    </location>
</feature>
<feature type="active site" evidence="1">
    <location>
        <position position="196"/>
    </location>
</feature>
<feature type="active site" evidence="1">
    <location>
        <position position="198"/>
    </location>
</feature>
<organism>
    <name type="scientific">Bradyrhizobium diazoefficiens (strain JCM 10833 / BCRC 13528 / IAM 13628 / NBRC 14792 / USDA 110)</name>
    <dbReference type="NCBI Taxonomy" id="224911"/>
    <lineage>
        <taxon>Bacteria</taxon>
        <taxon>Pseudomonadati</taxon>
        <taxon>Pseudomonadota</taxon>
        <taxon>Alphaproteobacteria</taxon>
        <taxon>Hyphomicrobiales</taxon>
        <taxon>Nitrobacteraceae</taxon>
        <taxon>Bradyrhizobium</taxon>
    </lineage>
</organism>
<sequence>MSIAIIDYGSGNLHSAAKAFERAARSLEDPQKVFVTSDPDQAYGADRLVLPGVGAFADCRRGLDAVNGMVEAITEAVRVKARPMFGICVGMQLFATRGKEHVITQGLNWIGGDVEKITPRDESLKIPHMGWNTLDVLREHPVLNKLPLGPKGQHAYFVHSYHLNAANEADVLARADYGGPVTAIVAKDTAIGTQFHPEKSQRFGLALISNFLRWKP</sequence>
<keyword id="KW-0028">Amino-acid biosynthesis</keyword>
<keyword id="KW-0963">Cytoplasm</keyword>
<keyword id="KW-0315">Glutamine amidotransferase</keyword>
<keyword id="KW-0368">Histidine biosynthesis</keyword>
<keyword id="KW-0378">Hydrolase</keyword>
<keyword id="KW-0456">Lyase</keyword>
<keyword id="KW-1185">Reference proteome</keyword>